<proteinExistence type="predicted"/>
<comment type="subcellular location">
    <subcellularLocation>
        <location evidence="3">Mitochondrion</location>
    </subcellularLocation>
</comment>
<evidence type="ECO:0000255" key="1">
    <source>
        <dbReference type="PROSITE-ProRule" id="PRU00405"/>
    </source>
</evidence>
<evidence type="ECO:0000256" key="2">
    <source>
        <dbReference type="SAM" id="MobiDB-lite"/>
    </source>
</evidence>
<evidence type="ECO:0000305" key="3"/>
<organism>
    <name type="scientific">Marchantia polymorpha</name>
    <name type="common">Common liverwort</name>
    <name type="synonym">Marchantia aquatica</name>
    <dbReference type="NCBI Taxonomy" id="3197"/>
    <lineage>
        <taxon>Eukaryota</taxon>
        <taxon>Viridiplantae</taxon>
        <taxon>Streptophyta</taxon>
        <taxon>Embryophyta</taxon>
        <taxon>Marchantiophyta</taxon>
        <taxon>Marchantiopsida</taxon>
        <taxon>Marchantiidae</taxon>
        <taxon>Marchantiales</taxon>
        <taxon>Marchantiaceae</taxon>
        <taxon>Marchantia</taxon>
    </lineage>
</organism>
<feature type="chain" id="PRO_0000196836" description="Uncharacterized mitochondrial protein ymf11">
    <location>
        <begin position="1"/>
        <end position="732"/>
    </location>
</feature>
<feature type="domain" description="Reverse transcriptase" evidence="1">
    <location>
        <begin position="176"/>
        <end position="524"/>
    </location>
</feature>
<feature type="region of interest" description="Disordered" evidence="2">
    <location>
        <begin position="145"/>
        <end position="207"/>
    </location>
</feature>
<feature type="compositionally biased region" description="Basic and acidic residues" evidence="2">
    <location>
        <begin position="170"/>
        <end position="179"/>
    </location>
</feature>
<accession>P38456</accession>
<gene>
    <name type="primary">YMF11</name>
</gene>
<sequence length="732" mass="83093">MDNQLFFKSIIATLPKRIHKCQTVSKAPENCAKMPKSIQFRGFSGTGEPFRRLDFRMGQRAFSYERQRPLAFLSFSSLPGRREGSAWTERLRALWKHCKKDQFKAEGLFRLIKDINLWIAAYKKLSPGSKNDGERPKGTSIKALETLRDSVINPPPTLGGGSSTGRSWPKGHETLERGSKALGPESPKETSLALQKKRRRPEMASPHTILPRVLRTHKVSRALWVVGPSDASLALRGLTQKDKDILVQEVIRSILETLYEPYFLSCSHGFRPGRSQHTCLKQIRRDFVGTVWFIEGETSQYFNKIDKQVLIGLMRRRIRDNRFLNLVQKEIKTSLRAGAEGTGVGPLLCNIVLHELDLFVMRLKRIVDRGRRRAVNPESKELWRQSAALIDRTTAHRARVPFPSGAFGRGLGHPQETRQINYVRFADDFLIGVIGPRALAERIRGLVTRFIEVRLKLRLTLDKTRKPIQSRPNTLPAHYVPMGPKETGPKVENDFTISGGPGKKKTQIFCITKNKKIPFLGYLISRDSKHTYNLVRRGRRYRIRRSGGLSLLVDMQKVINRLAEKGFCDKSGHPKPNFAYFQYPQSYSVARIASILRGLANYYHLANSKRQCVTRLSYILRTSLAKTYAAKFKLGTAAKVFAKGGRDLSKPIKAKKARRPLLNRVLGSKTTAHRRRGAGSEGHSPAIPYTRYGQIKLPDTKPLTKNWQPGQARLNCIAKKNLYQNCNREGND</sequence>
<dbReference type="EMBL" id="M68929">
    <property type="protein sequence ID" value="AAC09442.1"/>
    <property type="molecule type" value="Genomic_DNA"/>
</dbReference>
<dbReference type="PIR" id="S25995">
    <property type="entry name" value="S25995"/>
</dbReference>
<dbReference type="SMR" id="P38456"/>
<dbReference type="GO" id="GO:0005739">
    <property type="term" value="C:mitochondrion"/>
    <property type="evidence" value="ECO:0007669"/>
    <property type="project" value="UniProtKB-SubCell"/>
</dbReference>
<dbReference type="GO" id="GO:0006397">
    <property type="term" value="P:mRNA processing"/>
    <property type="evidence" value="ECO:0007669"/>
    <property type="project" value="InterPro"/>
</dbReference>
<dbReference type="CDD" id="cd01651">
    <property type="entry name" value="RT_G2_intron"/>
    <property type="match status" value="1"/>
</dbReference>
<dbReference type="InterPro" id="IPR043502">
    <property type="entry name" value="DNA/RNA_pol_sf"/>
</dbReference>
<dbReference type="InterPro" id="IPR024937">
    <property type="entry name" value="Domain_X"/>
</dbReference>
<dbReference type="InterPro" id="IPR051083">
    <property type="entry name" value="GrpII_Intron_Splice-Mob/Def"/>
</dbReference>
<dbReference type="InterPro" id="IPR000477">
    <property type="entry name" value="RT_dom"/>
</dbReference>
<dbReference type="PANTHER" id="PTHR34047:SF2">
    <property type="entry name" value="NUCLEAR INTRON MATURASE 1, MITOCHONDRIAL"/>
    <property type="match status" value="1"/>
</dbReference>
<dbReference type="PANTHER" id="PTHR34047">
    <property type="entry name" value="NUCLEAR INTRON MATURASE 1, MITOCHONDRIAL-RELATED"/>
    <property type="match status" value="1"/>
</dbReference>
<dbReference type="Pfam" id="PF01348">
    <property type="entry name" value="Intron_maturas2"/>
    <property type="match status" value="1"/>
</dbReference>
<dbReference type="SUPFAM" id="SSF56672">
    <property type="entry name" value="DNA/RNA polymerases"/>
    <property type="match status" value="1"/>
</dbReference>
<dbReference type="PROSITE" id="PS50878">
    <property type="entry name" value="RT_POL"/>
    <property type="match status" value="1"/>
</dbReference>
<keyword id="KW-0496">Mitochondrion</keyword>
<name>YMF11_MARPO</name>
<reference key="1">
    <citation type="journal article" date="1992" name="J. Mol. Biol.">
        <title>Gene organization deduced from the complete sequence of liverwort Marchantia polymorpha mitochondrial DNA. A primitive form of plant mitochondrial genome.</title>
        <authorList>
            <person name="Oda K."/>
            <person name="Yamato K."/>
            <person name="Ohta E."/>
            <person name="Nakamura Y."/>
            <person name="Takemura M."/>
            <person name="Nozato N."/>
            <person name="Akashi K."/>
            <person name="Kanegae T."/>
            <person name="Ogura Y."/>
            <person name="Kohchi T."/>
            <person name="Ohyama K."/>
        </authorList>
    </citation>
    <scope>NUCLEOTIDE SEQUENCE [GENOMIC DNA]</scope>
</reference>
<protein>
    <recommendedName>
        <fullName>Uncharacterized mitochondrial protein ymf11</fullName>
    </recommendedName>
    <alternativeName>
        <fullName>ORF7323</fullName>
    </alternativeName>
</protein>
<geneLocation type="mitochondrion"/>